<feature type="chain" id="PRO_1000008153" description="Thiamine-phosphate synthase">
    <location>
        <begin position="1"/>
        <end position="210"/>
    </location>
</feature>
<feature type="binding site" evidence="1">
    <location>
        <begin position="36"/>
        <end position="40"/>
    </location>
    <ligand>
        <name>4-amino-2-methyl-5-(diphosphooxymethyl)pyrimidine</name>
        <dbReference type="ChEBI" id="CHEBI:57841"/>
    </ligand>
</feature>
<feature type="binding site" evidence="1">
    <location>
        <position position="68"/>
    </location>
    <ligand>
        <name>4-amino-2-methyl-5-(diphosphooxymethyl)pyrimidine</name>
        <dbReference type="ChEBI" id="CHEBI:57841"/>
    </ligand>
</feature>
<feature type="binding site" evidence="1">
    <location>
        <position position="69"/>
    </location>
    <ligand>
        <name>Mg(2+)</name>
        <dbReference type="ChEBI" id="CHEBI:18420"/>
    </ligand>
</feature>
<feature type="binding site" evidence="1">
    <location>
        <position position="88"/>
    </location>
    <ligand>
        <name>Mg(2+)</name>
        <dbReference type="ChEBI" id="CHEBI:18420"/>
    </ligand>
</feature>
<feature type="binding site" evidence="1">
    <location>
        <position position="107"/>
    </location>
    <ligand>
        <name>4-amino-2-methyl-5-(diphosphooxymethyl)pyrimidine</name>
        <dbReference type="ChEBI" id="CHEBI:57841"/>
    </ligand>
</feature>
<feature type="binding site" evidence="1">
    <location>
        <begin position="133"/>
        <end position="135"/>
    </location>
    <ligand>
        <name>2-[(2R,5Z)-2-carboxy-4-methylthiazol-5(2H)-ylidene]ethyl phosphate</name>
        <dbReference type="ChEBI" id="CHEBI:62899"/>
    </ligand>
</feature>
<feature type="binding site" evidence="1">
    <location>
        <position position="136"/>
    </location>
    <ligand>
        <name>4-amino-2-methyl-5-(diphosphooxymethyl)pyrimidine</name>
        <dbReference type="ChEBI" id="CHEBI:57841"/>
    </ligand>
</feature>
<feature type="binding site" evidence="1">
    <location>
        <position position="164"/>
    </location>
    <ligand>
        <name>2-[(2R,5Z)-2-carboxy-4-methylthiazol-5(2H)-ylidene]ethyl phosphate</name>
        <dbReference type="ChEBI" id="CHEBI:62899"/>
    </ligand>
</feature>
<feature type="binding site" evidence="1">
    <location>
        <begin position="184"/>
        <end position="185"/>
    </location>
    <ligand>
        <name>2-[(2R,5Z)-2-carboxy-4-methylthiazol-5(2H)-ylidene]ethyl phosphate</name>
        <dbReference type="ChEBI" id="CHEBI:62899"/>
    </ligand>
</feature>
<gene>
    <name evidence="1" type="primary">thiE</name>
    <name type="ordered locus">Moth_2162</name>
</gene>
<comment type="function">
    <text evidence="1">Condenses 4-methyl-5-(beta-hydroxyethyl)thiazole monophosphate (THZ-P) and 2-methyl-4-amino-5-hydroxymethyl pyrimidine pyrophosphate (HMP-PP) to form thiamine monophosphate (TMP).</text>
</comment>
<comment type="catalytic activity">
    <reaction evidence="1">
        <text>2-[(2R,5Z)-2-carboxy-4-methylthiazol-5(2H)-ylidene]ethyl phosphate + 4-amino-2-methyl-5-(diphosphooxymethyl)pyrimidine + 2 H(+) = thiamine phosphate + CO2 + diphosphate</text>
        <dbReference type="Rhea" id="RHEA:47844"/>
        <dbReference type="ChEBI" id="CHEBI:15378"/>
        <dbReference type="ChEBI" id="CHEBI:16526"/>
        <dbReference type="ChEBI" id="CHEBI:33019"/>
        <dbReference type="ChEBI" id="CHEBI:37575"/>
        <dbReference type="ChEBI" id="CHEBI:57841"/>
        <dbReference type="ChEBI" id="CHEBI:62899"/>
        <dbReference type="EC" id="2.5.1.3"/>
    </reaction>
</comment>
<comment type="catalytic activity">
    <reaction evidence="1">
        <text>2-(2-carboxy-4-methylthiazol-5-yl)ethyl phosphate + 4-amino-2-methyl-5-(diphosphooxymethyl)pyrimidine + 2 H(+) = thiamine phosphate + CO2 + diphosphate</text>
        <dbReference type="Rhea" id="RHEA:47848"/>
        <dbReference type="ChEBI" id="CHEBI:15378"/>
        <dbReference type="ChEBI" id="CHEBI:16526"/>
        <dbReference type="ChEBI" id="CHEBI:33019"/>
        <dbReference type="ChEBI" id="CHEBI:37575"/>
        <dbReference type="ChEBI" id="CHEBI:57841"/>
        <dbReference type="ChEBI" id="CHEBI:62890"/>
        <dbReference type="EC" id="2.5.1.3"/>
    </reaction>
</comment>
<comment type="catalytic activity">
    <reaction evidence="1">
        <text>4-methyl-5-(2-phosphooxyethyl)-thiazole + 4-amino-2-methyl-5-(diphosphooxymethyl)pyrimidine + H(+) = thiamine phosphate + diphosphate</text>
        <dbReference type="Rhea" id="RHEA:22328"/>
        <dbReference type="ChEBI" id="CHEBI:15378"/>
        <dbReference type="ChEBI" id="CHEBI:33019"/>
        <dbReference type="ChEBI" id="CHEBI:37575"/>
        <dbReference type="ChEBI" id="CHEBI:57841"/>
        <dbReference type="ChEBI" id="CHEBI:58296"/>
        <dbReference type="EC" id="2.5.1.3"/>
    </reaction>
</comment>
<comment type="cofactor">
    <cofactor evidence="1">
        <name>Mg(2+)</name>
        <dbReference type="ChEBI" id="CHEBI:18420"/>
    </cofactor>
    <text evidence="1">Binds 1 Mg(2+) ion per subunit.</text>
</comment>
<comment type="pathway">
    <text evidence="1">Cofactor biosynthesis; thiamine diphosphate biosynthesis; thiamine phosphate from 4-amino-2-methyl-5-diphosphomethylpyrimidine and 4-methyl-5-(2-phosphoethyl)-thiazole: step 1/1.</text>
</comment>
<comment type="similarity">
    <text evidence="1">Belongs to the thiamine-phosphate synthase family.</text>
</comment>
<name>THIE_MOOTA</name>
<keyword id="KW-0460">Magnesium</keyword>
<keyword id="KW-0479">Metal-binding</keyword>
<keyword id="KW-0784">Thiamine biosynthesis</keyword>
<keyword id="KW-0808">Transferase</keyword>
<accession>Q2RGI8</accession>
<dbReference type="EC" id="2.5.1.3" evidence="1"/>
<dbReference type="EMBL" id="CP000232">
    <property type="protein sequence ID" value="ABC20451.1"/>
    <property type="molecule type" value="Genomic_DNA"/>
</dbReference>
<dbReference type="RefSeq" id="YP_430994.1">
    <property type="nucleotide sequence ID" value="NC_007644.1"/>
</dbReference>
<dbReference type="SMR" id="Q2RGI8"/>
<dbReference type="STRING" id="264732.Moth_2162"/>
<dbReference type="EnsemblBacteria" id="ABC20451">
    <property type="protein sequence ID" value="ABC20451"/>
    <property type="gene ID" value="Moth_2162"/>
</dbReference>
<dbReference type="KEGG" id="mta:Moth_2162"/>
<dbReference type="PATRIC" id="fig|264732.11.peg.2355"/>
<dbReference type="eggNOG" id="COG0352">
    <property type="taxonomic scope" value="Bacteria"/>
</dbReference>
<dbReference type="HOGENOM" id="CLU_018272_3_2_9"/>
<dbReference type="OrthoDB" id="9812206at2"/>
<dbReference type="UniPathway" id="UPA00060">
    <property type="reaction ID" value="UER00141"/>
</dbReference>
<dbReference type="GO" id="GO:0005737">
    <property type="term" value="C:cytoplasm"/>
    <property type="evidence" value="ECO:0007669"/>
    <property type="project" value="TreeGrafter"/>
</dbReference>
<dbReference type="GO" id="GO:0000287">
    <property type="term" value="F:magnesium ion binding"/>
    <property type="evidence" value="ECO:0007669"/>
    <property type="project" value="UniProtKB-UniRule"/>
</dbReference>
<dbReference type="GO" id="GO:0004789">
    <property type="term" value="F:thiamine-phosphate diphosphorylase activity"/>
    <property type="evidence" value="ECO:0007669"/>
    <property type="project" value="UniProtKB-UniRule"/>
</dbReference>
<dbReference type="GO" id="GO:0009228">
    <property type="term" value="P:thiamine biosynthetic process"/>
    <property type="evidence" value="ECO:0007669"/>
    <property type="project" value="UniProtKB-KW"/>
</dbReference>
<dbReference type="GO" id="GO:0009229">
    <property type="term" value="P:thiamine diphosphate biosynthetic process"/>
    <property type="evidence" value="ECO:0007669"/>
    <property type="project" value="UniProtKB-UniRule"/>
</dbReference>
<dbReference type="CDD" id="cd00564">
    <property type="entry name" value="TMP_TenI"/>
    <property type="match status" value="1"/>
</dbReference>
<dbReference type="FunFam" id="3.20.20.70:FF:000096">
    <property type="entry name" value="Thiamine-phosphate synthase"/>
    <property type="match status" value="1"/>
</dbReference>
<dbReference type="Gene3D" id="3.20.20.70">
    <property type="entry name" value="Aldolase class I"/>
    <property type="match status" value="1"/>
</dbReference>
<dbReference type="HAMAP" id="MF_00097">
    <property type="entry name" value="TMP_synthase"/>
    <property type="match status" value="1"/>
</dbReference>
<dbReference type="InterPro" id="IPR013785">
    <property type="entry name" value="Aldolase_TIM"/>
</dbReference>
<dbReference type="InterPro" id="IPR036206">
    <property type="entry name" value="ThiamineP_synth_sf"/>
</dbReference>
<dbReference type="InterPro" id="IPR022998">
    <property type="entry name" value="ThiamineP_synth_TenI"/>
</dbReference>
<dbReference type="InterPro" id="IPR034291">
    <property type="entry name" value="TMP_synthase"/>
</dbReference>
<dbReference type="NCBIfam" id="TIGR00693">
    <property type="entry name" value="thiE"/>
    <property type="match status" value="1"/>
</dbReference>
<dbReference type="PANTHER" id="PTHR20857">
    <property type="entry name" value="THIAMINE-PHOSPHATE PYROPHOSPHORYLASE"/>
    <property type="match status" value="1"/>
</dbReference>
<dbReference type="PANTHER" id="PTHR20857:SF15">
    <property type="entry name" value="THIAMINE-PHOSPHATE SYNTHASE"/>
    <property type="match status" value="1"/>
</dbReference>
<dbReference type="Pfam" id="PF02581">
    <property type="entry name" value="TMP-TENI"/>
    <property type="match status" value="1"/>
</dbReference>
<dbReference type="SUPFAM" id="SSF51391">
    <property type="entry name" value="Thiamin phosphate synthase"/>
    <property type="match status" value="1"/>
</dbReference>
<protein>
    <recommendedName>
        <fullName evidence="1">Thiamine-phosphate synthase</fullName>
        <shortName evidence="1">TP synthase</shortName>
        <shortName evidence="1">TPS</shortName>
        <ecNumber evidence="1">2.5.1.3</ecNumber>
    </recommendedName>
    <alternativeName>
        <fullName evidence="1">Thiamine-phosphate pyrophosphorylase</fullName>
        <shortName evidence="1">TMP pyrophosphorylase</shortName>
        <shortName evidence="1">TMP-PPase</shortName>
    </alternativeName>
</protein>
<reference key="1">
    <citation type="journal article" date="2008" name="Environ. Microbiol.">
        <title>The complete genome sequence of Moorella thermoacetica (f. Clostridium thermoaceticum).</title>
        <authorList>
            <person name="Pierce E."/>
            <person name="Xie G."/>
            <person name="Barabote R.D."/>
            <person name="Saunders E."/>
            <person name="Han C.S."/>
            <person name="Detter J.C."/>
            <person name="Richardson P."/>
            <person name="Brettin T.S."/>
            <person name="Das A."/>
            <person name="Ljungdahl L.G."/>
            <person name="Ragsdale S.W."/>
        </authorList>
    </citation>
    <scope>NUCLEOTIDE SEQUENCE [LARGE SCALE GENOMIC DNA]</scope>
    <source>
        <strain>ATCC 39073 / JCM 9320</strain>
    </source>
</reference>
<proteinExistence type="inferred from homology"/>
<sequence length="210" mass="21409">MPQWDLYVVITTKLGGGRPTLELVRGALAGGATAIQLREKELPARELVELGRAIRELTRDAGATFIVNDRLDIALAVEADGLHIGQEDLPAPVARKLLGPEKILGVSAGTTDEARQAEVDGADYLGVGSIFATGSKGDAGSPIGLEGLRAIRAAVKIPIVGIGGINPDNAAGVIAAGADGVSVISAVIGAADVAAAARRLREVVTRARGK</sequence>
<organism>
    <name type="scientific">Moorella thermoacetica (strain ATCC 39073 / JCM 9320)</name>
    <dbReference type="NCBI Taxonomy" id="264732"/>
    <lineage>
        <taxon>Bacteria</taxon>
        <taxon>Bacillati</taxon>
        <taxon>Bacillota</taxon>
        <taxon>Clostridia</taxon>
        <taxon>Moorellales</taxon>
        <taxon>Moorellaceae</taxon>
        <taxon>Moorella</taxon>
    </lineage>
</organism>
<evidence type="ECO:0000255" key="1">
    <source>
        <dbReference type="HAMAP-Rule" id="MF_00097"/>
    </source>
</evidence>